<keyword id="KW-0479">Metal-binding</keyword>
<keyword id="KW-0521">NADP</keyword>
<keyword id="KW-0560">Oxidoreductase</keyword>
<keyword id="KW-0630">Potassium</keyword>
<keyword id="KW-0659">Purine metabolism</keyword>
<keyword id="KW-1185">Reference proteome</keyword>
<proteinExistence type="inferred from homology"/>
<reference key="1">
    <citation type="journal article" date="1998" name="Science">
        <title>Genome sequence of the nematode C. elegans: a platform for investigating biology.</title>
        <authorList>
            <consortium name="The C. elegans sequencing consortium"/>
        </authorList>
    </citation>
    <scope>NUCLEOTIDE SEQUENCE [LARGE SCALE GENOMIC DNA]</scope>
    <source>
        <strain>Bristol N2</strain>
    </source>
</reference>
<dbReference type="EC" id="1.7.1.7" evidence="1"/>
<dbReference type="EMBL" id="FO081012">
    <property type="protein sequence ID" value="CCD68485.1"/>
    <property type="molecule type" value="Genomic_DNA"/>
</dbReference>
<dbReference type="PIR" id="T03917">
    <property type="entry name" value="T03917"/>
</dbReference>
<dbReference type="SMR" id="O16294"/>
<dbReference type="BioGRID" id="43886">
    <property type="interactions" value="10"/>
</dbReference>
<dbReference type="FunCoup" id="O16294">
    <property type="interactions" value="2109"/>
</dbReference>
<dbReference type="STRING" id="6239.F32D1.5a.1"/>
<dbReference type="PaxDb" id="6239-F32D1.5"/>
<dbReference type="PeptideAtlas" id="O16294"/>
<dbReference type="EnsemblMetazoa" id="F32D1.5a.1">
    <property type="protein sequence ID" value="F32D1.5a.1"/>
    <property type="gene ID" value="WBGene00017984"/>
</dbReference>
<dbReference type="EnsemblMetazoa" id="F32D1.5a.2">
    <property type="protein sequence ID" value="F32D1.5a.2"/>
    <property type="gene ID" value="WBGene00017984"/>
</dbReference>
<dbReference type="KEGG" id="cel:CELE_F32D1.5"/>
<dbReference type="UCSC" id="F32D1.5.1">
    <property type="organism name" value="c. elegans"/>
</dbReference>
<dbReference type="AGR" id="WB:WBGene00017984"/>
<dbReference type="CTD" id="178834"/>
<dbReference type="WormBase" id="F32D1.5a">
    <property type="protein sequence ID" value="CE09869"/>
    <property type="gene ID" value="WBGene00017984"/>
    <property type="gene designation" value="gmpr-1"/>
</dbReference>
<dbReference type="eggNOG" id="KOG2550">
    <property type="taxonomic scope" value="Eukaryota"/>
</dbReference>
<dbReference type="GeneTree" id="ENSGT00940000156595"/>
<dbReference type="HOGENOM" id="CLU_022552_5_3_1"/>
<dbReference type="InParanoid" id="O16294"/>
<dbReference type="OMA" id="IVWRQNS"/>
<dbReference type="OrthoDB" id="418595at2759"/>
<dbReference type="PhylomeDB" id="O16294"/>
<dbReference type="Reactome" id="R-CEL-74217">
    <property type="pathway name" value="Purine salvage"/>
</dbReference>
<dbReference type="PRO" id="PR:O16294"/>
<dbReference type="Proteomes" id="UP000001940">
    <property type="component" value="Chromosome V"/>
</dbReference>
<dbReference type="Bgee" id="WBGene00017984">
    <property type="expression patterns" value="Expressed in germ line (C elegans) and 4 other cell types or tissues"/>
</dbReference>
<dbReference type="ExpressionAtlas" id="O16294">
    <property type="expression patterns" value="baseline and differential"/>
</dbReference>
<dbReference type="GO" id="GO:1902560">
    <property type="term" value="C:GMP reductase complex"/>
    <property type="evidence" value="ECO:0007669"/>
    <property type="project" value="InterPro"/>
</dbReference>
<dbReference type="GO" id="GO:0003920">
    <property type="term" value="F:GMP reductase activity"/>
    <property type="evidence" value="ECO:0007669"/>
    <property type="project" value="UniProtKB-UniRule"/>
</dbReference>
<dbReference type="GO" id="GO:0046872">
    <property type="term" value="F:metal ion binding"/>
    <property type="evidence" value="ECO:0007669"/>
    <property type="project" value="UniProtKB-KW"/>
</dbReference>
<dbReference type="GO" id="GO:0006144">
    <property type="term" value="P:purine nucleobase metabolic process"/>
    <property type="evidence" value="ECO:0007669"/>
    <property type="project" value="UniProtKB-KW"/>
</dbReference>
<dbReference type="GO" id="GO:0006163">
    <property type="term" value="P:purine nucleotide metabolic process"/>
    <property type="evidence" value="ECO:0007669"/>
    <property type="project" value="UniProtKB-UniRule"/>
</dbReference>
<dbReference type="CDD" id="cd00381">
    <property type="entry name" value="IMPDH"/>
    <property type="match status" value="1"/>
</dbReference>
<dbReference type="FunFam" id="3.20.20.70:FF:000012">
    <property type="entry name" value="GMP reductase"/>
    <property type="match status" value="1"/>
</dbReference>
<dbReference type="Gene3D" id="3.20.20.70">
    <property type="entry name" value="Aldolase class I"/>
    <property type="match status" value="1"/>
</dbReference>
<dbReference type="HAMAP" id="MF_00596">
    <property type="entry name" value="GMP_reduct_type1"/>
    <property type="match status" value="1"/>
</dbReference>
<dbReference type="InterPro" id="IPR013785">
    <property type="entry name" value="Aldolase_TIM"/>
</dbReference>
<dbReference type="InterPro" id="IPR050139">
    <property type="entry name" value="GMP_reductase"/>
</dbReference>
<dbReference type="InterPro" id="IPR005993">
    <property type="entry name" value="GMPR"/>
</dbReference>
<dbReference type="InterPro" id="IPR015875">
    <property type="entry name" value="IMP_DH/GMP_Rdtase_CS"/>
</dbReference>
<dbReference type="InterPro" id="IPR001093">
    <property type="entry name" value="IMP_DH_GMPRt"/>
</dbReference>
<dbReference type="NCBIfam" id="TIGR01305">
    <property type="entry name" value="GMP_reduct_1"/>
    <property type="match status" value="1"/>
</dbReference>
<dbReference type="NCBIfam" id="NF003470">
    <property type="entry name" value="PRK05096.1"/>
    <property type="match status" value="1"/>
</dbReference>
<dbReference type="PANTHER" id="PTHR43170">
    <property type="entry name" value="GMP REDUCTASE"/>
    <property type="match status" value="1"/>
</dbReference>
<dbReference type="PANTHER" id="PTHR43170:SF5">
    <property type="entry name" value="GMP REDUCTASE"/>
    <property type="match status" value="1"/>
</dbReference>
<dbReference type="Pfam" id="PF00478">
    <property type="entry name" value="IMPDH"/>
    <property type="match status" value="1"/>
</dbReference>
<dbReference type="PIRSF" id="PIRSF000235">
    <property type="entry name" value="GMP_reductase"/>
    <property type="match status" value="1"/>
</dbReference>
<dbReference type="SMART" id="SM01240">
    <property type="entry name" value="IMPDH"/>
    <property type="match status" value="1"/>
</dbReference>
<dbReference type="SUPFAM" id="SSF51412">
    <property type="entry name" value="Inosine monophosphate dehydrogenase (IMPDH)"/>
    <property type="match status" value="1"/>
</dbReference>
<dbReference type="PROSITE" id="PS00487">
    <property type="entry name" value="IMP_DH_GMP_RED"/>
    <property type="match status" value="1"/>
</dbReference>
<comment type="function">
    <text evidence="1">Catalyzes the irreversible NADPH-dependent deamination of GMP to IMP. It functions in the conversion of nucleobase, nucleoside and nucleotide derivatives of G to A nucleotides, and in maintaining the intracellular balance of A and G nucleotides.</text>
</comment>
<comment type="catalytic activity">
    <reaction evidence="1">
        <text>IMP + NH4(+) + NADP(+) = GMP + NADPH + 2 H(+)</text>
        <dbReference type="Rhea" id="RHEA:17185"/>
        <dbReference type="ChEBI" id="CHEBI:15378"/>
        <dbReference type="ChEBI" id="CHEBI:28938"/>
        <dbReference type="ChEBI" id="CHEBI:57783"/>
        <dbReference type="ChEBI" id="CHEBI:58053"/>
        <dbReference type="ChEBI" id="CHEBI:58115"/>
        <dbReference type="ChEBI" id="CHEBI:58349"/>
        <dbReference type="EC" id="1.7.1.7"/>
    </reaction>
</comment>
<comment type="subunit">
    <text evidence="1">Homotetramer.</text>
</comment>
<comment type="similarity">
    <text evidence="1">Belongs to the IMPDH/GMPR family. GuaC type 1 subfamily.</text>
</comment>
<organism>
    <name type="scientific">Caenorhabditis elegans</name>
    <dbReference type="NCBI Taxonomy" id="6239"/>
    <lineage>
        <taxon>Eukaryota</taxon>
        <taxon>Metazoa</taxon>
        <taxon>Ecdysozoa</taxon>
        <taxon>Nematoda</taxon>
        <taxon>Chromadorea</taxon>
        <taxon>Rhabditida</taxon>
        <taxon>Rhabditina</taxon>
        <taxon>Rhabditomorpha</taxon>
        <taxon>Rhabditoidea</taxon>
        <taxon>Rhabditidae</taxon>
        <taxon>Peloderinae</taxon>
        <taxon>Caenorhabditis</taxon>
    </lineage>
</organism>
<protein>
    <recommendedName>
        <fullName evidence="1">GMP reductase</fullName>
        <shortName evidence="1">GMPR</shortName>
        <ecNumber evidence="1">1.7.1.7</ecNumber>
    </recommendedName>
    <alternativeName>
        <fullName evidence="1">Guanosine 5'-monophosphate oxidoreductase</fullName>
        <shortName evidence="1">Guanosine monophosphate reductase</shortName>
    </alternativeName>
</protein>
<evidence type="ECO:0000255" key="1">
    <source>
        <dbReference type="HAMAP-Rule" id="MF_03195"/>
    </source>
</evidence>
<evidence type="ECO:0000312" key="2">
    <source>
        <dbReference type="WormBase" id="F32D1.5a"/>
    </source>
</evidence>
<name>GMPR_CAEEL</name>
<gene>
    <name evidence="2" type="primary">gmpr-1</name>
    <name evidence="2" type="ORF">F32D1.5</name>
</gene>
<accession>O16294</accession>
<feature type="chain" id="PRO_0000093729" description="GMP reductase">
    <location>
        <begin position="1"/>
        <end position="358"/>
    </location>
</feature>
<feature type="active site" description="Thioimidate intermediate" evidence="1">
    <location>
        <position position="187"/>
    </location>
</feature>
<feature type="active site" description="Proton donor/acceptor" evidence="1">
    <location>
        <position position="189"/>
    </location>
</feature>
<feature type="binding site" evidence="1">
    <location>
        <begin position="26"/>
        <end position="27"/>
    </location>
    <ligand>
        <name>NADP(+)</name>
        <dbReference type="ChEBI" id="CHEBI:58349"/>
        <note>ligand shared between two neighboring subunits</note>
    </ligand>
</feature>
<feature type="binding site" description="in other chain" evidence="1">
    <location>
        <position position="78"/>
    </location>
    <ligand>
        <name>NADP(+)</name>
        <dbReference type="ChEBI" id="CHEBI:58349"/>
        <note>ligand shared between two neighboring subunits</note>
    </ligand>
</feature>
<feature type="binding site" description="in other chain" evidence="1">
    <location>
        <begin position="130"/>
        <end position="132"/>
    </location>
    <ligand>
        <name>NADP(+)</name>
        <dbReference type="ChEBI" id="CHEBI:58349"/>
        <note>ligand shared between two neighboring subunits</note>
    </ligand>
</feature>
<feature type="binding site" description="in other chain" evidence="1">
    <location>
        <begin position="181"/>
        <end position="182"/>
    </location>
    <ligand>
        <name>NADP(+)</name>
        <dbReference type="ChEBI" id="CHEBI:58349"/>
        <note>ligand shared between two neighboring subunits</note>
    </ligand>
</feature>
<feature type="binding site" evidence="1">
    <location>
        <position position="182"/>
    </location>
    <ligand>
        <name>K(+)</name>
        <dbReference type="ChEBI" id="CHEBI:29103"/>
    </ligand>
</feature>
<feature type="binding site" evidence="1">
    <location>
        <position position="184"/>
    </location>
    <ligand>
        <name>K(+)</name>
        <dbReference type="ChEBI" id="CHEBI:29103"/>
    </ligand>
</feature>
<feature type="binding site" evidence="1">
    <location>
        <position position="187"/>
    </location>
    <ligand>
        <name>K(+)</name>
        <dbReference type="ChEBI" id="CHEBI:29103"/>
    </ligand>
</feature>
<feature type="binding site" evidence="1">
    <location>
        <position position="190"/>
    </location>
    <ligand>
        <name>K(+)</name>
        <dbReference type="ChEBI" id="CHEBI:29103"/>
    </ligand>
</feature>
<feature type="binding site" evidence="1">
    <location>
        <begin position="220"/>
        <end position="222"/>
    </location>
    <ligand>
        <name>GMP</name>
        <dbReference type="ChEBI" id="CHEBI:58115"/>
    </ligand>
</feature>
<feature type="binding site" evidence="1">
    <location>
        <begin position="243"/>
        <end position="244"/>
    </location>
    <ligand>
        <name>GMP</name>
        <dbReference type="ChEBI" id="CHEBI:58115"/>
    </ligand>
</feature>
<feature type="binding site" evidence="1">
    <location>
        <begin position="269"/>
        <end position="271"/>
    </location>
    <ligand>
        <name>GMP</name>
        <dbReference type="ChEBI" id="CHEBI:58115"/>
    </ligand>
</feature>
<feature type="binding site" description="in other chain" evidence="1">
    <location>
        <position position="270"/>
    </location>
    <ligand>
        <name>NADP(+)</name>
        <dbReference type="ChEBI" id="CHEBI:58349"/>
        <note>ligand shared between two neighboring subunits</note>
    </ligand>
</feature>
<feature type="binding site" description="in other chain" evidence="1">
    <location>
        <begin position="286"/>
        <end position="287"/>
    </location>
    <ligand>
        <name>NADP(+)</name>
        <dbReference type="ChEBI" id="CHEBI:58349"/>
        <note>ligand shared between two neighboring subunits</note>
    </ligand>
</feature>
<feature type="binding site" evidence="1">
    <location>
        <begin position="287"/>
        <end position="291"/>
    </location>
    <ligand>
        <name>GMP</name>
        <dbReference type="ChEBI" id="CHEBI:58115"/>
    </ligand>
</feature>
<feature type="binding site" evidence="1">
    <location>
        <begin position="315"/>
        <end position="318"/>
    </location>
    <ligand>
        <name>NADP(+)</name>
        <dbReference type="ChEBI" id="CHEBI:58349"/>
        <note>ligand shared between two neighboring subunits</note>
    </ligand>
</feature>
<sequence>MPRIENEPKLDFKDVLLRPKRSTLKSRADVELDREYVFRNSKATYTGVPVVASNMDTVGTFEMAAALNNHKIFTTIHKHYSVDEWKAFAASASPDTFNNLAISSGISDNDWTKLNTVITELPQLKYICLDVANGYSESFVEFIRRVREAYPKHTIMAGNVVTGEMVEELILSGADIVKVGIGPGSVCTTRKKAGVGYPQLSAVLECADAAHGLNGHVMSDGGCSNPGDVAKAFGAGADFVMIGGLFAGHDQSGGDLIEHNGKKFKLFYGMSSDTAMKKHHGSVAEYRASEGKTVTIPYRGDVNGTVQDILGGIRSACTYTGAKHLKELAKRATFIRVTQQTNDMYVPFEVPTVPAPSK</sequence>